<feature type="chain" id="PRO_1000101184" description="Glycine--tRNA ligase alpha subunit">
    <location>
        <begin position="1"/>
        <end position="299"/>
    </location>
</feature>
<evidence type="ECO:0000255" key="1">
    <source>
        <dbReference type="HAMAP-Rule" id="MF_00254"/>
    </source>
</evidence>
<accession>A5EV42</accession>
<reference key="1">
    <citation type="journal article" date="2007" name="Nat. Biotechnol.">
        <title>Genome sequence and identification of candidate vaccine antigens from the animal pathogen Dichelobacter nodosus.</title>
        <authorList>
            <person name="Myers G.S.A."/>
            <person name="Parker D."/>
            <person name="Al-Hasani K."/>
            <person name="Kennan R.M."/>
            <person name="Seemann T."/>
            <person name="Ren Q."/>
            <person name="Badger J.H."/>
            <person name="Selengut J.D."/>
            <person name="Deboy R.T."/>
            <person name="Tettelin H."/>
            <person name="Boyce J.D."/>
            <person name="McCarl V.P."/>
            <person name="Han X."/>
            <person name="Nelson W.C."/>
            <person name="Madupu R."/>
            <person name="Mohamoud Y."/>
            <person name="Holley T."/>
            <person name="Fedorova N."/>
            <person name="Khouri H."/>
            <person name="Bottomley S.P."/>
            <person name="Whittington R.J."/>
            <person name="Adler B."/>
            <person name="Songer J.G."/>
            <person name="Rood J.I."/>
            <person name="Paulsen I.T."/>
        </authorList>
    </citation>
    <scope>NUCLEOTIDE SEQUENCE [LARGE SCALE GENOMIC DNA]</scope>
    <source>
        <strain>VCS1703A</strain>
    </source>
</reference>
<proteinExistence type="inferred from homology"/>
<protein>
    <recommendedName>
        <fullName evidence="1">Glycine--tRNA ligase alpha subunit</fullName>
        <ecNumber evidence="1">6.1.1.14</ecNumber>
    </recommendedName>
    <alternativeName>
        <fullName evidence="1">Glycyl-tRNA synthetase alpha subunit</fullName>
        <shortName evidence="1">GlyRS</shortName>
    </alternativeName>
</protein>
<keyword id="KW-0030">Aminoacyl-tRNA synthetase</keyword>
<keyword id="KW-0067">ATP-binding</keyword>
<keyword id="KW-0963">Cytoplasm</keyword>
<keyword id="KW-0436">Ligase</keyword>
<keyword id="KW-0547">Nucleotide-binding</keyword>
<keyword id="KW-0648">Protein biosynthesis</keyword>
<keyword id="KW-1185">Reference proteome</keyword>
<dbReference type="EC" id="6.1.1.14" evidence="1"/>
<dbReference type="EMBL" id="CP000513">
    <property type="protein sequence ID" value="ABQ14314.1"/>
    <property type="molecule type" value="Genomic_DNA"/>
</dbReference>
<dbReference type="RefSeq" id="WP_012031034.1">
    <property type="nucleotide sequence ID" value="NC_009446.1"/>
</dbReference>
<dbReference type="SMR" id="A5EV42"/>
<dbReference type="STRING" id="246195.DNO_0701"/>
<dbReference type="KEGG" id="dno:DNO_0701"/>
<dbReference type="eggNOG" id="COG0752">
    <property type="taxonomic scope" value="Bacteria"/>
</dbReference>
<dbReference type="HOGENOM" id="CLU_057066_1_0_6"/>
<dbReference type="OrthoDB" id="9802183at2"/>
<dbReference type="Proteomes" id="UP000000248">
    <property type="component" value="Chromosome"/>
</dbReference>
<dbReference type="GO" id="GO:0005829">
    <property type="term" value="C:cytosol"/>
    <property type="evidence" value="ECO:0007669"/>
    <property type="project" value="TreeGrafter"/>
</dbReference>
<dbReference type="GO" id="GO:0005524">
    <property type="term" value="F:ATP binding"/>
    <property type="evidence" value="ECO:0007669"/>
    <property type="project" value="UniProtKB-UniRule"/>
</dbReference>
<dbReference type="GO" id="GO:0004820">
    <property type="term" value="F:glycine-tRNA ligase activity"/>
    <property type="evidence" value="ECO:0007669"/>
    <property type="project" value="UniProtKB-UniRule"/>
</dbReference>
<dbReference type="GO" id="GO:0006426">
    <property type="term" value="P:glycyl-tRNA aminoacylation"/>
    <property type="evidence" value="ECO:0007669"/>
    <property type="project" value="UniProtKB-UniRule"/>
</dbReference>
<dbReference type="FunFam" id="3.30.930.10:FF:000006">
    <property type="entry name" value="Glycine--tRNA ligase alpha subunit"/>
    <property type="match status" value="1"/>
</dbReference>
<dbReference type="Gene3D" id="3.30.930.10">
    <property type="entry name" value="Bira Bifunctional Protein, Domain 2"/>
    <property type="match status" value="1"/>
</dbReference>
<dbReference type="Gene3D" id="1.20.58.180">
    <property type="entry name" value="Class II aaRS and biotin synthetases, domain 2"/>
    <property type="match status" value="1"/>
</dbReference>
<dbReference type="HAMAP" id="MF_00254">
    <property type="entry name" value="Gly_tRNA_synth_alpha"/>
    <property type="match status" value="1"/>
</dbReference>
<dbReference type="InterPro" id="IPR045864">
    <property type="entry name" value="aa-tRNA-synth_II/BPL/LPL"/>
</dbReference>
<dbReference type="InterPro" id="IPR006194">
    <property type="entry name" value="Gly-tRNA-synth_heterodimer"/>
</dbReference>
<dbReference type="InterPro" id="IPR002310">
    <property type="entry name" value="Gly-tRNA_ligase_asu"/>
</dbReference>
<dbReference type="NCBIfam" id="TIGR00388">
    <property type="entry name" value="glyQ"/>
    <property type="match status" value="1"/>
</dbReference>
<dbReference type="NCBIfam" id="NF006827">
    <property type="entry name" value="PRK09348.1"/>
    <property type="match status" value="1"/>
</dbReference>
<dbReference type="PANTHER" id="PTHR30075:SF2">
    <property type="entry name" value="GLYCINE--TRNA LIGASE, CHLOROPLASTIC_MITOCHONDRIAL 2"/>
    <property type="match status" value="1"/>
</dbReference>
<dbReference type="PANTHER" id="PTHR30075">
    <property type="entry name" value="GLYCYL-TRNA SYNTHETASE"/>
    <property type="match status" value="1"/>
</dbReference>
<dbReference type="Pfam" id="PF02091">
    <property type="entry name" value="tRNA-synt_2e"/>
    <property type="match status" value="1"/>
</dbReference>
<dbReference type="PRINTS" id="PR01044">
    <property type="entry name" value="TRNASYNTHGA"/>
</dbReference>
<dbReference type="SUPFAM" id="SSF55681">
    <property type="entry name" value="Class II aaRS and biotin synthetases"/>
    <property type="match status" value="1"/>
</dbReference>
<dbReference type="PROSITE" id="PS50861">
    <property type="entry name" value="AA_TRNA_LIGASE_II_GLYAB"/>
    <property type="match status" value="1"/>
</dbReference>
<sequence length="299" mass="34382">MLSFQDMILTLQRFWIKHGCALMQPYDMEVGAGTFHESTFLRAIGPEPWRAIFVQASRRPSDGRYGENPNRLQRYYQMQVVIKPSAPDLQALYLQSLYAIGIDPATQDIRFVEDNWESPTLGAWGLGWEVWLNGMEISQFTYFQQVGGIECKPVTGELTYGLERIAMYLQNVNSVYDLIWTTTPDGVLTYGDVHQQNEREQSFYNFEYADIADLCAQFDAAEKMSLLLAQKKFPLPAYEQALKASHLFNLLDARRAISVTERQRYILRVRALSKAAAEAWYETRAALDFPLCRQQGIEK</sequence>
<gene>
    <name evidence="1" type="primary">glyQ</name>
    <name type="ordered locus">DNO_0701</name>
</gene>
<organism>
    <name type="scientific">Dichelobacter nodosus (strain VCS1703A)</name>
    <dbReference type="NCBI Taxonomy" id="246195"/>
    <lineage>
        <taxon>Bacteria</taxon>
        <taxon>Pseudomonadati</taxon>
        <taxon>Pseudomonadota</taxon>
        <taxon>Gammaproteobacteria</taxon>
        <taxon>Cardiobacteriales</taxon>
        <taxon>Cardiobacteriaceae</taxon>
        <taxon>Dichelobacter</taxon>
    </lineage>
</organism>
<comment type="catalytic activity">
    <reaction evidence="1">
        <text>tRNA(Gly) + glycine + ATP = glycyl-tRNA(Gly) + AMP + diphosphate</text>
        <dbReference type="Rhea" id="RHEA:16013"/>
        <dbReference type="Rhea" id="RHEA-COMP:9664"/>
        <dbReference type="Rhea" id="RHEA-COMP:9683"/>
        <dbReference type="ChEBI" id="CHEBI:30616"/>
        <dbReference type="ChEBI" id="CHEBI:33019"/>
        <dbReference type="ChEBI" id="CHEBI:57305"/>
        <dbReference type="ChEBI" id="CHEBI:78442"/>
        <dbReference type="ChEBI" id="CHEBI:78522"/>
        <dbReference type="ChEBI" id="CHEBI:456215"/>
        <dbReference type="EC" id="6.1.1.14"/>
    </reaction>
</comment>
<comment type="subunit">
    <text evidence="1">Tetramer of two alpha and two beta subunits.</text>
</comment>
<comment type="subcellular location">
    <subcellularLocation>
        <location evidence="1">Cytoplasm</location>
    </subcellularLocation>
</comment>
<comment type="similarity">
    <text evidence="1">Belongs to the class-II aminoacyl-tRNA synthetase family.</text>
</comment>
<name>SYGA_DICNV</name>